<proteinExistence type="inferred from homology"/>
<dbReference type="EC" id="1.1.1.38" evidence="1"/>
<dbReference type="EMBL" id="CP000802">
    <property type="protein sequence ID" value="ABV05890.1"/>
    <property type="molecule type" value="Genomic_DNA"/>
</dbReference>
<dbReference type="RefSeq" id="WP_000433465.1">
    <property type="nucleotide sequence ID" value="NC_009800.1"/>
</dbReference>
<dbReference type="SMR" id="A8A036"/>
<dbReference type="KEGG" id="ecx:EcHS_A1564"/>
<dbReference type="HOGENOM" id="CLU_011405_5_2_6"/>
<dbReference type="GO" id="GO:0005829">
    <property type="term" value="C:cytosol"/>
    <property type="evidence" value="ECO:0007669"/>
    <property type="project" value="TreeGrafter"/>
</dbReference>
<dbReference type="GO" id="GO:0004471">
    <property type="term" value="F:malate dehydrogenase (decarboxylating) (NAD+) activity"/>
    <property type="evidence" value="ECO:0007669"/>
    <property type="project" value="UniProtKB-UniRule"/>
</dbReference>
<dbReference type="GO" id="GO:0046872">
    <property type="term" value="F:metal ion binding"/>
    <property type="evidence" value="ECO:0007669"/>
    <property type="project" value="UniProtKB-KW"/>
</dbReference>
<dbReference type="GO" id="GO:0051287">
    <property type="term" value="F:NAD binding"/>
    <property type="evidence" value="ECO:0007669"/>
    <property type="project" value="InterPro"/>
</dbReference>
<dbReference type="GO" id="GO:0008948">
    <property type="term" value="F:oxaloacetate decarboxylase activity"/>
    <property type="evidence" value="ECO:0007669"/>
    <property type="project" value="UniProtKB-UniRule"/>
</dbReference>
<dbReference type="GO" id="GO:0006108">
    <property type="term" value="P:malate metabolic process"/>
    <property type="evidence" value="ECO:0007669"/>
    <property type="project" value="TreeGrafter"/>
</dbReference>
<dbReference type="CDD" id="cd05312">
    <property type="entry name" value="NAD_bind_1_malic_enz"/>
    <property type="match status" value="1"/>
</dbReference>
<dbReference type="FunFam" id="3.40.50.10380:FF:000001">
    <property type="entry name" value="NAD-dependent malic enzyme"/>
    <property type="match status" value="1"/>
</dbReference>
<dbReference type="FunFam" id="3.40.50.720:FF:000055">
    <property type="entry name" value="NAD-dependent malic enzyme"/>
    <property type="match status" value="1"/>
</dbReference>
<dbReference type="Gene3D" id="3.40.50.10380">
    <property type="entry name" value="Malic enzyme, N-terminal domain"/>
    <property type="match status" value="1"/>
</dbReference>
<dbReference type="Gene3D" id="3.40.50.720">
    <property type="entry name" value="NAD(P)-binding Rossmann-like Domain"/>
    <property type="match status" value="1"/>
</dbReference>
<dbReference type="HAMAP" id="MF_01619">
    <property type="entry name" value="NAD_malic_enz"/>
    <property type="match status" value="1"/>
</dbReference>
<dbReference type="InterPro" id="IPR046346">
    <property type="entry name" value="Aminoacid_DH-like_N_sf"/>
</dbReference>
<dbReference type="InterPro" id="IPR015884">
    <property type="entry name" value="Malic_enzyme_CS"/>
</dbReference>
<dbReference type="InterPro" id="IPR012301">
    <property type="entry name" value="Malic_N_dom"/>
</dbReference>
<dbReference type="InterPro" id="IPR037062">
    <property type="entry name" value="Malic_N_dom_sf"/>
</dbReference>
<dbReference type="InterPro" id="IPR012302">
    <property type="entry name" value="Malic_NAD-bd"/>
</dbReference>
<dbReference type="InterPro" id="IPR001891">
    <property type="entry name" value="Malic_OxRdtase"/>
</dbReference>
<dbReference type="InterPro" id="IPR036291">
    <property type="entry name" value="NAD(P)-bd_dom_sf"/>
</dbReference>
<dbReference type="InterPro" id="IPR023667">
    <property type="entry name" value="NAD_malic_enz_proteobac"/>
</dbReference>
<dbReference type="NCBIfam" id="NF010052">
    <property type="entry name" value="PRK13529.1"/>
    <property type="match status" value="1"/>
</dbReference>
<dbReference type="PANTHER" id="PTHR23406">
    <property type="entry name" value="MALIC ENZYME-RELATED"/>
    <property type="match status" value="1"/>
</dbReference>
<dbReference type="PANTHER" id="PTHR23406:SF34">
    <property type="entry name" value="NAD-DEPENDENT MALIC ENZYME, MITOCHONDRIAL"/>
    <property type="match status" value="1"/>
</dbReference>
<dbReference type="Pfam" id="PF00390">
    <property type="entry name" value="malic"/>
    <property type="match status" value="1"/>
</dbReference>
<dbReference type="Pfam" id="PF03949">
    <property type="entry name" value="Malic_M"/>
    <property type="match status" value="1"/>
</dbReference>
<dbReference type="PIRSF" id="PIRSF000106">
    <property type="entry name" value="ME"/>
    <property type="match status" value="1"/>
</dbReference>
<dbReference type="PRINTS" id="PR00072">
    <property type="entry name" value="MALOXRDTASE"/>
</dbReference>
<dbReference type="SMART" id="SM01274">
    <property type="entry name" value="malic"/>
    <property type="match status" value="1"/>
</dbReference>
<dbReference type="SMART" id="SM00919">
    <property type="entry name" value="Malic_M"/>
    <property type="match status" value="1"/>
</dbReference>
<dbReference type="SUPFAM" id="SSF53223">
    <property type="entry name" value="Aminoacid dehydrogenase-like, N-terminal domain"/>
    <property type="match status" value="1"/>
</dbReference>
<dbReference type="SUPFAM" id="SSF51735">
    <property type="entry name" value="NAD(P)-binding Rossmann-fold domains"/>
    <property type="match status" value="1"/>
</dbReference>
<dbReference type="PROSITE" id="PS00331">
    <property type="entry name" value="MALIC_ENZYMES"/>
    <property type="match status" value="1"/>
</dbReference>
<feature type="chain" id="PRO_1000069529" description="NAD-dependent malic enzyme">
    <location>
        <begin position="1"/>
        <end position="565"/>
    </location>
</feature>
<feature type="active site" description="Proton donor" evidence="1">
    <location>
        <position position="104"/>
    </location>
</feature>
<feature type="active site" description="Proton acceptor" evidence="1">
    <location>
        <position position="175"/>
    </location>
</feature>
<feature type="binding site" evidence="1">
    <location>
        <position position="157"/>
    </location>
    <ligand>
        <name>NAD(+)</name>
        <dbReference type="ChEBI" id="CHEBI:57540"/>
    </ligand>
</feature>
<feature type="binding site" evidence="1">
    <location>
        <position position="246"/>
    </location>
    <ligand>
        <name>a divalent metal cation</name>
        <dbReference type="ChEBI" id="CHEBI:60240"/>
    </ligand>
</feature>
<feature type="binding site" evidence="1">
    <location>
        <position position="247"/>
    </location>
    <ligand>
        <name>a divalent metal cation</name>
        <dbReference type="ChEBI" id="CHEBI:60240"/>
    </ligand>
</feature>
<feature type="binding site" evidence="1">
    <location>
        <position position="270"/>
    </location>
    <ligand>
        <name>a divalent metal cation</name>
        <dbReference type="ChEBI" id="CHEBI:60240"/>
    </ligand>
</feature>
<feature type="binding site" evidence="1">
    <location>
        <position position="270"/>
    </location>
    <ligand>
        <name>NAD(+)</name>
        <dbReference type="ChEBI" id="CHEBI:57540"/>
    </ligand>
</feature>
<feature type="binding site" evidence="1">
    <location>
        <position position="418"/>
    </location>
    <ligand>
        <name>NAD(+)</name>
        <dbReference type="ChEBI" id="CHEBI:57540"/>
    </ligand>
</feature>
<feature type="site" description="Important for activity" evidence="1">
    <location>
        <position position="270"/>
    </location>
</feature>
<protein>
    <recommendedName>
        <fullName evidence="1">NAD-dependent malic enzyme</fullName>
        <shortName evidence="1">NAD-ME</shortName>
        <ecNumber evidence="1">1.1.1.38</ecNumber>
    </recommendedName>
</protein>
<comment type="catalytic activity">
    <reaction evidence="1">
        <text>(S)-malate + NAD(+) = pyruvate + CO2 + NADH</text>
        <dbReference type="Rhea" id="RHEA:12653"/>
        <dbReference type="ChEBI" id="CHEBI:15361"/>
        <dbReference type="ChEBI" id="CHEBI:15589"/>
        <dbReference type="ChEBI" id="CHEBI:16526"/>
        <dbReference type="ChEBI" id="CHEBI:57540"/>
        <dbReference type="ChEBI" id="CHEBI:57945"/>
        <dbReference type="EC" id="1.1.1.38"/>
    </reaction>
</comment>
<comment type="catalytic activity">
    <reaction evidence="1">
        <text>oxaloacetate + H(+) = pyruvate + CO2</text>
        <dbReference type="Rhea" id="RHEA:15641"/>
        <dbReference type="ChEBI" id="CHEBI:15361"/>
        <dbReference type="ChEBI" id="CHEBI:15378"/>
        <dbReference type="ChEBI" id="CHEBI:16452"/>
        <dbReference type="ChEBI" id="CHEBI:16526"/>
        <dbReference type="EC" id="1.1.1.38"/>
    </reaction>
</comment>
<comment type="cofactor">
    <cofactor evidence="1">
        <name>Mg(2+)</name>
        <dbReference type="ChEBI" id="CHEBI:18420"/>
    </cofactor>
    <cofactor evidence="1">
        <name>Mn(2+)</name>
        <dbReference type="ChEBI" id="CHEBI:29035"/>
    </cofactor>
    <text evidence="1">Divalent metal cations. Prefers magnesium or manganese.</text>
</comment>
<comment type="subunit">
    <text evidence="1">Homotetramer.</text>
</comment>
<comment type="similarity">
    <text evidence="1">Belongs to the malic enzymes family.</text>
</comment>
<reference key="1">
    <citation type="journal article" date="2008" name="J. Bacteriol.">
        <title>The pangenome structure of Escherichia coli: comparative genomic analysis of E. coli commensal and pathogenic isolates.</title>
        <authorList>
            <person name="Rasko D.A."/>
            <person name="Rosovitz M.J."/>
            <person name="Myers G.S.A."/>
            <person name="Mongodin E.F."/>
            <person name="Fricke W.F."/>
            <person name="Gajer P."/>
            <person name="Crabtree J."/>
            <person name="Sebaihia M."/>
            <person name="Thomson N.R."/>
            <person name="Chaudhuri R."/>
            <person name="Henderson I.R."/>
            <person name="Sperandio V."/>
            <person name="Ravel J."/>
        </authorList>
    </citation>
    <scope>NUCLEOTIDE SEQUENCE [LARGE SCALE GENOMIC DNA]</scope>
    <source>
        <strain>HS</strain>
    </source>
</reference>
<evidence type="ECO:0000255" key="1">
    <source>
        <dbReference type="HAMAP-Rule" id="MF_01619"/>
    </source>
</evidence>
<gene>
    <name evidence="1" type="primary">maeA</name>
    <name type="ordered locus">EcHS_A1564</name>
</gene>
<keyword id="KW-0479">Metal-binding</keyword>
<keyword id="KW-0520">NAD</keyword>
<keyword id="KW-0560">Oxidoreductase</keyword>
<organism>
    <name type="scientific">Escherichia coli O9:H4 (strain HS)</name>
    <dbReference type="NCBI Taxonomy" id="331112"/>
    <lineage>
        <taxon>Bacteria</taxon>
        <taxon>Pseudomonadati</taxon>
        <taxon>Pseudomonadota</taxon>
        <taxon>Gammaproteobacteria</taxon>
        <taxon>Enterobacterales</taxon>
        <taxon>Enterobacteriaceae</taxon>
        <taxon>Escherichia</taxon>
    </lineage>
</organism>
<sequence length="565" mass="63181">MEPKTKKQRSLYIPYAGPVLLEFPLLNKGSAFSMEERRNFNLLGLLPEVVETIEEQAERAWIQYQGFKTEIDKHIYLRNIQDTNETLFYRLVNNHLDEMMPVIYTPTVGAACERFSEIYRRSRGVFISYQNRHNMDDILQNVPNHNIKVIVVTDGERILGLGDQGIGGMGIPIGKLSLYTACGGISPAYTLPVVLDVGTNNQQLLNDPLYMGWRNPRITDDEYYEFVDEFIQAVKQRWPDVLLQFEDFAQKNAMPLLNRYRNEICSFNDDIQGTAAVTVGTLIAASRAAGGQLSEKKIVFLGAGSAGCGIAEMIIAQTQREGLSEEAARQKVFMVDRFGLLTDKMPNLLPFQTKLVQKRENLSDWDTDSDVLSLLDVVRNVKPDILIGVSGQTGLFTEEIIREMHKHCPRPIVMPLSNPTSRVEATPQDIIAWTEGNALVATGSPFNPVVWKDKIYPIAQCNNAFIFPGIGLGVIASGASRITDEMLMSASETLAQYSPLVLNGEGMVLPELKDIQKVSRAIAFAVGKMAQQQGVAVKTSAEALQQAIDDNFWQAEYRDYRRTSI</sequence>
<name>MAO1_ECOHS</name>
<accession>A8A036</accession>